<proteinExistence type="inferred from homology"/>
<evidence type="ECO:0000255" key="1">
    <source>
        <dbReference type="HAMAP-Rule" id="MF_00570"/>
    </source>
</evidence>
<gene>
    <name evidence="1" type="primary">pncB</name>
    <name type="ordered locus">EcHS_A1039</name>
</gene>
<reference key="1">
    <citation type="journal article" date="2008" name="J. Bacteriol.">
        <title>The pangenome structure of Escherichia coli: comparative genomic analysis of E. coli commensal and pathogenic isolates.</title>
        <authorList>
            <person name="Rasko D.A."/>
            <person name="Rosovitz M.J."/>
            <person name="Myers G.S.A."/>
            <person name="Mongodin E.F."/>
            <person name="Fricke W.F."/>
            <person name="Gajer P."/>
            <person name="Crabtree J."/>
            <person name="Sebaihia M."/>
            <person name="Thomson N.R."/>
            <person name="Chaudhuri R."/>
            <person name="Henderson I.R."/>
            <person name="Sperandio V."/>
            <person name="Ravel J."/>
        </authorList>
    </citation>
    <scope>NUCLEOTIDE SEQUENCE [LARGE SCALE GENOMIC DNA]</scope>
    <source>
        <strain>HS</strain>
    </source>
</reference>
<comment type="function">
    <text evidence="1">Catalyzes the synthesis of beta-nicotinate D-ribonucleotide from nicotinate and 5-phospho-D-ribose 1-phosphate at the expense of ATP.</text>
</comment>
<comment type="catalytic activity">
    <reaction evidence="1">
        <text>nicotinate + 5-phospho-alpha-D-ribose 1-diphosphate + ATP + H2O = nicotinate beta-D-ribonucleotide + ADP + phosphate + diphosphate</text>
        <dbReference type="Rhea" id="RHEA:36163"/>
        <dbReference type="ChEBI" id="CHEBI:15377"/>
        <dbReference type="ChEBI" id="CHEBI:30616"/>
        <dbReference type="ChEBI" id="CHEBI:32544"/>
        <dbReference type="ChEBI" id="CHEBI:33019"/>
        <dbReference type="ChEBI" id="CHEBI:43474"/>
        <dbReference type="ChEBI" id="CHEBI:57502"/>
        <dbReference type="ChEBI" id="CHEBI:58017"/>
        <dbReference type="ChEBI" id="CHEBI:456216"/>
        <dbReference type="EC" id="6.3.4.21"/>
    </reaction>
</comment>
<comment type="pathway">
    <text evidence="1">Cofactor biosynthesis; NAD(+) biosynthesis; nicotinate D-ribonucleotide from nicotinate: step 1/1.</text>
</comment>
<comment type="PTM">
    <text evidence="1">Transiently phosphorylated on a His residue during the reaction cycle. Phosphorylation strongly increases the affinity for substrates and increases the rate of nicotinate D-ribonucleotide production. Dephosphorylation regenerates the low-affinity form of the enzyme, leading to product release.</text>
</comment>
<comment type="similarity">
    <text evidence="1">Belongs to the NAPRTase family.</text>
</comment>
<sequence length="400" mass="45911">MTQFASPVLHSLLDTDAYKLHMQQAVFHHYYDVHVAAEFRCRGDDLLGIYADAIREQIQAMQHLRLQDDEYQWLSALPFFKADYLNWLREFRFNPEQVTVSNDNGKLDIRLSGPWREVILWEVPLLAVISEMVHRYRSPQADVAQALDTLESKLVDFSALTAGLDMSRFHLMDFGTRRRFSREVQETIVKRLQQESWFVGTSNYDLARRLSLTPMGTQAHEWFQAHQQISPDLANSQRAALAAWLEEYPDQLGIALTDCITMDAFLRDFGVEFASRYQGLRHDSGDPVEWGEKAIAHYEKLGIDPQSKTLVFSDNLDLRKAVELYRHFSSRVQLSFGIGTRLTCDIPQVKPLNIVIKLVECNGKPVAKLSDSPGKTICHDKAFVRALRKAFDLPHIKKAS</sequence>
<name>PNCB_ECOHS</name>
<keyword id="KW-0436">Ligase</keyword>
<keyword id="KW-0597">Phosphoprotein</keyword>
<keyword id="KW-0662">Pyridine nucleotide biosynthesis</keyword>
<accession>A7ZYN4</accession>
<organism>
    <name type="scientific">Escherichia coli O9:H4 (strain HS)</name>
    <dbReference type="NCBI Taxonomy" id="331112"/>
    <lineage>
        <taxon>Bacteria</taxon>
        <taxon>Pseudomonadati</taxon>
        <taxon>Pseudomonadota</taxon>
        <taxon>Gammaproteobacteria</taxon>
        <taxon>Enterobacterales</taxon>
        <taxon>Enterobacteriaceae</taxon>
        <taxon>Escherichia</taxon>
    </lineage>
</organism>
<dbReference type="EC" id="6.3.4.21" evidence="1"/>
<dbReference type="EMBL" id="CP000802">
    <property type="protein sequence ID" value="ABV05388.1"/>
    <property type="molecule type" value="Genomic_DNA"/>
</dbReference>
<dbReference type="RefSeq" id="WP_001297200.1">
    <property type="nucleotide sequence ID" value="NC_009800.1"/>
</dbReference>
<dbReference type="SMR" id="A7ZYN4"/>
<dbReference type="GeneID" id="93776483"/>
<dbReference type="KEGG" id="ecx:EcHS_A1039"/>
<dbReference type="HOGENOM" id="CLU_030991_1_0_6"/>
<dbReference type="UniPathway" id="UPA00253">
    <property type="reaction ID" value="UER00457"/>
</dbReference>
<dbReference type="GO" id="GO:0005829">
    <property type="term" value="C:cytosol"/>
    <property type="evidence" value="ECO:0007669"/>
    <property type="project" value="TreeGrafter"/>
</dbReference>
<dbReference type="GO" id="GO:0004516">
    <property type="term" value="F:nicotinate phosphoribosyltransferase activity"/>
    <property type="evidence" value="ECO:0007669"/>
    <property type="project" value="UniProtKB-UniRule"/>
</dbReference>
<dbReference type="GO" id="GO:0034355">
    <property type="term" value="P:NAD biosynthetic process via the salvage pathway"/>
    <property type="evidence" value="ECO:0007669"/>
    <property type="project" value="TreeGrafter"/>
</dbReference>
<dbReference type="CDD" id="cd01401">
    <property type="entry name" value="PncB_like"/>
    <property type="match status" value="1"/>
</dbReference>
<dbReference type="FunFam" id="3.20.140.10:FF:000001">
    <property type="entry name" value="Nicotinate phosphoribosyltransferase"/>
    <property type="match status" value="1"/>
</dbReference>
<dbReference type="Gene3D" id="3.20.140.10">
    <property type="entry name" value="nicotinate phosphoribosyltransferase"/>
    <property type="match status" value="1"/>
</dbReference>
<dbReference type="HAMAP" id="MF_00570">
    <property type="entry name" value="NAPRTase"/>
    <property type="match status" value="1"/>
</dbReference>
<dbReference type="InterPro" id="IPR041525">
    <property type="entry name" value="N/Namide_PRibTrfase"/>
</dbReference>
<dbReference type="InterPro" id="IPR040727">
    <property type="entry name" value="NAPRTase_N"/>
</dbReference>
<dbReference type="InterPro" id="IPR006406">
    <property type="entry name" value="Nic_PRibTrfase"/>
</dbReference>
<dbReference type="InterPro" id="IPR007229">
    <property type="entry name" value="Nic_PRibTrfase-Fam"/>
</dbReference>
<dbReference type="InterPro" id="IPR036068">
    <property type="entry name" value="Nicotinate_pribotase-like_C"/>
</dbReference>
<dbReference type="NCBIfam" id="TIGR01514">
    <property type="entry name" value="NAPRTase"/>
    <property type="match status" value="1"/>
</dbReference>
<dbReference type="NCBIfam" id="NF003704">
    <property type="entry name" value="PRK05321.1"/>
    <property type="match status" value="1"/>
</dbReference>
<dbReference type="PANTHER" id="PTHR11098">
    <property type="entry name" value="NICOTINATE PHOSPHORIBOSYLTRANSFERASE"/>
    <property type="match status" value="1"/>
</dbReference>
<dbReference type="PANTHER" id="PTHR11098:SF1">
    <property type="entry name" value="NICOTINATE PHOSPHORIBOSYLTRANSFERASE"/>
    <property type="match status" value="1"/>
</dbReference>
<dbReference type="Pfam" id="PF04095">
    <property type="entry name" value="NAPRTase"/>
    <property type="match status" value="1"/>
</dbReference>
<dbReference type="Pfam" id="PF17767">
    <property type="entry name" value="NAPRTase_N"/>
    <property type="match status" value="1"/>
</dbReference>
<dbReference type="PIRSF" id="PIRSF000484">
    <property type="entry name" value="NAPRT"/>
    <property type="match status" value="1"/>
</dbReference>
<dbReference type="SUPFAM" id="SSF51690">
    <property type="entry name" value="Nicotinate/Quinolinate PRTase C-terminal domain-like"/>
    <property type="match status" value="1"/>
</dbReference>
<dbReference type="SUPFAM" id="SSF54675">
    <property type="entry name" value="Nicotinate/Quinolinate PRTase N-terminal domain-like"/>
    <property type="match status" value="1"/>
</dbReference>
<protein>
    <recommendedName>
        <fullName evidence="1">Nicotinate phosphoribosyltransferase</fullName>
        <shortName evidence="1">NAPRTase</shortName>
        <ecNumber evidence="1">6.3.4.21</ecNumber>
    </recommendedName>
</protein>
<feature type="chain" id="PRO_1000061167" description="Nicotinate phosphoribosyltransferase">
    <location>
        <begin position="1"/>
        <end position="400"/>
    </location>
</feature>
<feature type="modified residue" description="Phosphohistidine; by autocatalysis" evidence="1">
    <location>
        <position position="220"/>
    </location>
</feature>